<proteinExistence type="inferred from homology"/>
<keyword id="KW-0028">Amino-acid biosynthesis</keyword>
<keyword id="KW-0055">Arginine biosynthesis</keyword>
<keyword id="KW-0963">Cytoplasm</keyword>
<keyword id="KW-0238">DNA-binding</keyword>
<keyword id="KW-1185">Reference proteome</keyword>
<keyword id="KW-0678">Repressor</keyword>
<keyword id="KW-0804">Transcription</keyword>
<keyword id="KW-0805">Transcription regulation</keyword>
<comment type="function">
    <text evidence="1">Regulates arginine biosynthesis genes.</text>
</comment>
<comment type="pathway">
    <text>Amino-acid biosynthesis; L-arginine biosynthesis [regulation].</text>
</comment>
<comment type="subcellular location">
    <subcellularLocation>
        <location evidence="1">Cytoplasm</location>
    </subcellularLocation>
</comment>
<comment type="similarity">
    <text evidence="1">Belongs to the ArgR family.</text>
</comment>
<comment type="sequence caution" evidence="2">
    <conflict type="erroneous initiation">
        <sequence resource="EMBL-CDS" id="AAF10320"/>
    </conflict>
</comment>
<sequence>MLGKEIGKDQRQKRIQDIILRESVSTQAELVKLLAKEGVQVTQATVSRDINELRLVRVPIGKGRHRYALAQYGGDSDIEEQLARLFQSFVQDVDRGENILVIRTADGHASGVALLLDRWKRDDIVGTLAGEDTIMVVARSTHDGESLMEEFNALMLG</sequence>
<dbReference type="EMBL" id="AE000513">
    <property type="protein sequence ID" value="AAF10320.1"/>
    <property type="status" value="ALT_INIT"/>
    <property type="molecule type" value="Genomic_DNA"/>
</dbReference>
<dbReference type="PIR" id="G75480">
    <property type="entry name" value="G75480"/>
</dbReference>
<dbReference type="RefSeq" id="NP_294465.1">
    <property type="nucleotide sequence ID" value="NC_001263.1"/>
</dbReference>
<dbReference type="RefSeq" id="WP_027479994.1">
    <property type="nucleotide sequence ID" value="NC_001263.1"/>
</dbReference>
<dbReference type="SMR" id="Q9RWC7"/>
<dbReference type="FunCoup" id="Q9RWC7">
    <property type="interactions" value="47"/>
</dbReference>
<dbReference type="STRING" id="243230.DR_0742"/>
<dbReference type="PaxDb" id="243230-DR_0742"/>
<dbReference type="EnsemblBacteria" id="AAF10320">
    <property type="protein sequence ID" value="AAF10320"/>
    <property type="gene ID" value="DR_0742"/>
</dbReference>
<dbReference type="GeneID" id="69516987"/>
<dbReference type="KEGG" id="dra:DR_0742"/>
<dbReference type="PATRIC" id="fig|243230.17.peg.921"/>
<dbReference type="eggNOG" id="COG1438">
    <property type="taxonomic scope" value="Bacteria"/>
</dbReference>
<dbReference type="HOGENOM" id="CLU_097103_3_0_0"/>
<dbReference type="InParanoid" id="Q9RWC7"/>
<dbReference type="OrthoDB" id="9807089at2"/>
<dbReference type="UniPathway" id="UPA00068"/>
<dbReference type="Proteomes" id="UP000002524">
    <property type="component" value="Chromosome 1"/>
</dbReference>
<dbReference type="GO" id="GO:0005737">
    <property type="term" value="C:cytoplasm"/>
    <property type="evidence" value="ECO:0007669"/>
    <property type="project" value="UniProtKB-SubCell"/>
</dbReference>
<dbReference type="GO" id="GO:0005667">
    <property type="term" value="C:transcription regulator complex"/>
    <property type="evidence" value="ECO:0000318"/>
    <property type="project" value="GO_Central"/>
</dbReference>
<dbReference type="GO" id="GO:0034618">
    <property type="term" value="F:arginine binding"/>
    <property type="evidence" value="ECO:0007669"/>
    <property type="project" value="InterPro"/>
</dbReference>
<dbReference type="GO" id="GO:0000987">
    <property type="term" value="F:cis-regulatory region sequence-specific DNA binding"/>
    <property type="evidence" value="ECO:0000318"/>
    <property type="project" value="GO_Central"/>
</dbReference>
<dbReference type="GO" id="GO:0003700">
    <property type="term" value="F:DNA-binding transcription factor activity"/>
    <property type="evidence" value="ECO:0007669"/>
    <property type="project" value="UniProtKB-UniRule"/>
</dbReference>
<dbReference type="GO" id="GO:0006526">
    <property type="term" value="P:L-arginine biosynthetic process"/>
    <property type="evidence" value="ECO:0007669"/>
    <property type="project" value="UniProtKB-UniPathway"/>
</dbReference>
<dbReference type="GO" id="GO:0051259">
    <property type="term" value="P:protein complex oligomerization"/>
    <property type="evidence" value="ECO:0007669"/>
    <property type="project" value="InterPro"/>
</dbReference>
<dbReference type="GO" id="GO:1900079">
    <property type="term" value="P:regulation of arginine biosynthetic process"/>
    <property type="evidence" value="ECO:0007669"/>
    <property type="project" value="UniProtKB-UniRule"/>
</dbReference>
<dbReference type="GO" id="GO:0000821">
    <property type="term" value="P:regulation of arginine metabolic process"/>
    <property type="evidence" value="ECO:0000318"/>
    <property type="project" value="GO_Central"/>
</dbReference>
<dbReference type="Gene3D" id="3.30.1360.40">
    <property type="match status" value="1"/>
</dbReference>
<dbReference type="Gene3D" id="1.10.10.10">
    <property type="entry name" value="Winged helix-like DNA-binding domain superfamily/Winged helix DNA-binding domain"/>
    <property type="match status" value="1"/>
</dbReference>
<dbReference type="HAMAP" id="MF_00173">
    <property type="entry name" value="Arg_repressor"/>
    <property type="match status" value="1"/>
</dbReference>
<dbReference type="InterPro" id="IPR001669">
    <property type="entry name" value="Arg_repress"/>
</dbReference>
<dbReference type="InterPro" id="IPR020899">
    <property type="entry name" value="Arg_repress_C"/>
</dbReference>
<dbReference type="InterPro" id="IPR036251">
    <property type="entry name" value="Arg_repress_C_sf"/>
</dbReference>
<dbReference type="InterPro" id="IPR020900">
    <property type="entry name" value="Arg_repress_DNA-bd"/>
</dbReference>
<dbReference type="InterPro" id="IPR036388">
    <property type="entry name" value="WH-like_DNA-bd_sf"/>
</dbReference>
<dbReference type="InterPro" id="IPR036390">
    <property type="entry name" value="WH_DNA-bd_sf"/>
</dbReference>
<dbReference type="NCBIfam" id="TIGR01529">
    <property type="entry name" value="argR_whole"/>
    <property type="match status" value="1"/>
</dbReference>
<dbReference type="PANTHER" id="PTHR34471">
    <property type="entry name" value="ARGININE REPRESSOR"/>
    <property type="match status" value="1"/>
</dbReference>
<dbReference type="PANTHER" id="PTHR34471:SF1">
    <property type="entry name" value="ARGININE REPRESSOR"/>
    <property type="match status" value="1"/>
</dbReference>
<dbReference type="Pfam" id="PF01316">
    <property type="entry name" value="Arg_repressor"/>
    <property type="match status" value="1"/>
</dbReference>
<dbReference type="Pfam" id="PF02863">
    <property type="entry name" value="Arg_repressor_C"/>
    <property type="match status" value="1"/>
</dbReference>
<dbReference type="PRINTS" id="PR01467">
    <property type="entry name" value="ARGREPRESSOR"/>
</dbReference>
<dbReference type="SUPFAM" id="SSF55252">
    <property type="entry name" value="C-terminal domain of arginine repressor"/>
    <property type="match status" value="1"/>
</dbReference>
<dbReference type="SUPFAM" id="SSF46785">
    <property type="entry name" value="Winged helix' DNA-binding domain"/>
    <property type="match status" value="1"/>
</dbReference>
<feature type="chain" id="PRO_0000205085" description="Arginine repressor">
    <location>
        <begin position="1"/>
        <end position="157"/>
    </location>
</feature>
<organism>
    <name type="scientific">Deinococcus radiodurans (strain ATCC 13939 / DSM 20539 / JCM 16871 / CCUG 27074 / LMG 4051 / NBRC 15346 / NCIMB 9279 / VKM B-1422 / R1)</name>
    <dbReference type="NCBI Taxonomy" id="243230"/>
    <lineage>
        <taxon>Bacteria</taxon>
        <taxon>Thermotogati</taxon>
        <taxon>Deinococcota</taxon>
        <taxon>Deinococci</taxon>
        <taxon>Deinococcales</taxon>
        <taxon>Deinococcaceae</taxon>
        <taxon>Deinococcus</taxon>
    </lineage>
</organism>
<reference key="1">
    <citation type="journal article" date="1999" name="Science">
        <title>Genome sequence of the radioresistant bacterium Deinococcus radiodurans R1.</title>
        <authorList>
            <person name="White O."/>
            <person name="Eisen J.A."/>
            <person name="Heidelberg J.F."/>
            <person name="Hickey E.K."/>
            <person name="Peterson J.D."/>
            <person name="Dodson R.J."/>
            <person name="Haft D.H."/>
            <person name="Gwinn M.L."/>
            <person name="Nelson W.C."/>
            <person name="Richardson D.L."/>
            <person name="Moffat K.S."/>
            <person name="Qin H."/>
            <person name="Jiang L."/>
            <person name="Pamphile W."/>
            <person name="Crosby M."/>
            <person name="Shen M."/>
            <person name="Vamathevan J.J."/>
            <person name="Lam P."/>
            <person name="McDonald L.A."/>
            <person name="Utterback T.R."/>
            <person name="Zalewski C."/>
            <person name="Makarova K.S."/>
            <person name="Aravind L."/>
            <person name="Daly M.J."/>
            <person name="Minton K.W."/>
            <person name="Fleischmann R.D."/>
            <person name="Ketchum K.A."/>
            <person name="Nelson K.E."/>
            <person name="Salzberg S.L."/>
            <person name="Smith H.O."/>
            <person name="Venter J.C."/>
            <person name="Fraser C.M."/>
        </authorList>
    </citation>
    <scope>NUCLEOTIDE SEQUENCE [LARGE SCALE GENOMIC DNA]</scope>
    <source>
        <strain>ATCC 13939 / DSM 20539 / JCM 16871 / CCUG 27074 / LMG 4051 / NBRC 15346 / NCIMB 9279 / VKM B-1422 / R1</strain>
    </source>
</reference>
<protein>
    <recommendedName>
        <fullName evidence="1">Arginine repressor</fullName>
    </recommendedName>
</protein>
<accession>Q9RWC7</accession>
<evidence type="ECO:0000255" key="1">
    <source>
        <dbReference type="HAMAP-Rule" id="MF_00173"/>
    </source>
</evidence>
<evidence type="ECO:0000305" key="2"/>
<gene>
    <name evidence="1" type="primary">argR</name>
    <name type="ordered locus">DR_0742</name>
</gene>
<name>ARGR_DEIRA</name>